<evidence type="ECO:0000255" key="1">
    <source>
        <dbReference type="HAMAP-Rule" id="MF_00050"/>
    </source>
</evidence>
<name>EFTS_CORGB</name>
<reference key="1">
    <citation type="journal article" date="2007" name="Microbiology">
        <title>Comparative analysis of the Corynebacterium glutamicum group and complete genome sequence of strain R.</title>
        <authorList>
            <person name="Yukawa H."/>
            <person name="Omumasaba C.A."/>
            <person name="Nonaka H."/>
            <person name="Kos P."/>
            <person name="Okai N."/>
            <person name="Suzuki N."/>
            <person name="Suda M."/>
            <person name="Tsuge Y."/>
            <person name="Watanabe J."/>
            <person name="Ikeda Y."/>
            <person name="Vertes A.A."/>
            <person name="Inui M."/>
        </authorList>
    </citation>
    <scope>NUCLEOTIDE SEQUENCE [LARGE SCALE GENOMIC DNA]</scope>
    <source>
        <strain>R</strain>
    </source>
</reference>
<proteinExistence type="inferred from homology"/>
<gene>
    <name evidence="1" type="primary">tsf</name>
    <name type="ordered locus">cgR_1853</name>
</gene>
<dbReference type="EMBL" id="AP009044">
    <property type="protein sequence ID" value="BAF54847.1"/>
    <property type="molecule type" value="Genomic_DNA"/>
</dbReference>
<dbReference type="RefSeq" id="WP_003857558.1">
    <property type="nucleotide sequence ID" value="NC_009342.1"/>
</dbReference>
<dbReference type="SMR" id="A4QF31"/>
<dbReference type="KEGG" id="cgt:cgR_1853"/>
<dbReference type="HOGENOM" id="CLU_047155_0_0_11"/>
<dbReference type="PhylomeDB" id="A4QF31"/>
<dbReference type="Proteomes" id="UP000006698">
    <property type="component" value="Chromosome"/>
</dbReference>
<dbReference type="GO" id="GO:0005737">
    <property type="term" value="C:cytoplasm"/>
    <property type="evidence" value="ECO:0007669"/>
    <property type="project" value="UniProtKB-SubCell"/>
</dbReference>
<dbReference type="GO" id="GO:0003746">
    <property type="term" value="F:translation elongation factor activity"/>
    <property type="evidence" value="ECO:0007669"/>
    <property type="project" value="UniProtKB-UniRule"/>
</dbReference>
<dbReference type="CDD" id="cd14275">
    <property type="entry name" value="UBA_EF-Ts"/>
    <property type="match status" value="1"/>
</dbReference>
<dbReference type="FunFam" id="1.10.286.20:FF:000001">
    <property type="entry name" value="Elongation factor Ts"/>
    <property type="match status" value="1"/>
</dbReference>
<dbReference type="FunFam" id="1.10.8.10:FF:000001">
    <property type="entry name" value="Elongation factor Ts"/>
    <property type="match status" value="1"/>
</dbReference>
<dbReference type="Gene3D" id="1.10.286.20">
    <property type="match status" value="1"/>
</dbReference>
<dbReference type="Gene3D" id="1.10.8.10">
    <property type="entry name" value="DNA helicase RuvA subunit, C-terminal domain"/>
    <property type="match status" value="1"/>
</dbReference>
<dbReference type="Gene3D" id="3.30.479.20">
    <property type="entry name" value="Elongation factor Ts, dimerisation domain"/>
    <property type="match status" value="2"/>
</dbReference>
<dbReference type="HAMAP" id="MF_00050">
    <property type="entry name" value="EF_Ts"/>
    <property type="match status" value="1"/>
</dbReference>
<dbReference type="InterPro" id="IPR036402">
    <property type="entry name" value="EF-Ts_dimer_sf"/>
</dbReference>
<dbReference type="InterPro" id="IPR001816">
    <property type="entry name" value="Transl_elong_EFTs/EF1B"/>
</dbReference>
<dbReference type="InterPro" id="IPR014039">
    <property type="entry name" value="Transl_elong_EFTs/EF1B_dimer"/>
</dbReference>
<dbReference type="InterPro" id="IPR018101">
    <property type="entry name" value="Transl_elong_Ts_CS"/>
</dbReference>
<dbReference type="InterPro" id="IPR009060">
    <property type="entry name" value="UBA-like_sf"/>
</dbReference>
<dbReference type="NCBIfam" id="TIGR00116">
    <property type="entry name" value="tsf"/>
    <property type="match status" value="1"/>
</dbReference>
<dbReference type="PANTHER" id="PTHR11741">
    <property type="entry name" value="ELONGATION FACTOR TS"/>
    <property type="match status" value="1"/>
</dbReference>
<dbReference type="PANTHER" id="PTHR11741:SF0">
    <property type="entry name" value="ELONGATION FACTOR TS, MITOCHONDRIAL"/>
    <property type="match status" value="1"/>
</dbReference>
<dbReference type="Pfam" id="PF00889">
    <property type="entry name" value="EF_TS"/>
    <property type="match status" value="1"/>
</dbReference>
<dbReference type="SUPFAM" id="SSF54713">
    <property type="entry name" value="Elongation factor Ts (EF-Ts), dimerisation domain"/>
    <property type="match status" value="1"/>
</dbReference>
<dbReference type="SUPFAM" id="SSF46934">
    <property type="entry name" value="UBA-like"/>
    <property type="match status" value="1"/>
</dbReference>
<dbReference type="PROSITE" id="PS01126">
    <property type="entry name" value="EF_TS_1"/>
    <property type="match status" value="1"/>
</dbReference>
<dbReference type="PROSITE" id="PS01127">
    <property type="entry name" value="EF_TS_2"/>
    <property type="match status" value="1"/>
</dbReference>
<protein>
    <recommendedName>
        <fullName evidence="1">Elongation factor Ts</fullName>
        <shortName evidence="1">EF-Ts</shortName>
    </recommendedName>
</protein>
<feature type="chain" id="PRO_1000006083" description="Elongation factor Ts">
    <location>
        <begin position="1"/>
        <end position="275"/>
    </location>
</feature>
<feature type="region of interest" description="Involved in Mg(2+) ion dislocation from EF-Tu" evidence="1">
    <location>
        <begin position="76"/>
        <end position="79"/>
    </location>
</feature>
<sequence>MANYTAADVKKLRELTGSGMLDCKKALEESAGDFDKAVEILRVKGAKDVGKRAERNATEGLVAVSGNTMIEVNSETDFVAKNSEFKEFAANVADAAAAAKANSQEELAAVDVDGKTADAALQEFSAKIGEKLELRRAVTLEGDKTAVYLHQRSADLPPAVGVLVAFTGEGEAAEAAARQAAMQIAALKASYLTREDVPAEIIEKERSIAEQITREEGKPEQAIPKIVEGRLNGFYKENVLLEQSSVADSKKTVKALLDEAGVTVTSFARFEVGQA</sequence>
<comment type="function">
    <text evidence="1">Associates with the EF-Tu.GDP complex and induces the exchange of GDP to GTP. It remains bound to the aminoacyl-tRNA.EF-Tu.GTP complex up to the GTP hydrolysis stage on the ribosome.</text>
</comment>
<comment type="subcellular location">
    <subcellularLocation>
        <location evidence="1">Cytoplasm</location>
    </subcellularLocation>
</comment>
<comment type="similarity">
    <text evidence="1">Belongs to the EF-Ts family.</text>
</comment>
<organism>
    <name type="scientific">Corynebacterium glutamicum (strain R)</name>
    <dbReference type="NCBI Taxonomy" id="340322"/>
    <lineage>
        <taxon>Bacteria</taxon>
        <taxon>Bacillati</taxon>
        <taxon>Actinomycetota</taxon>
        <taxon>Actinomycetes</taxon>
        <taxon>Mycobacteriales</taxon>
        <taxon>Corynebacteriaceae</taxon>
        <taxon>Corynebacterium</taxon>
    </lineage>
</organism>
<accession>A4QF31</accession>
<keyword id="KW-0963">Cytoplasm</keyword>
<keyword id="KW-0251">Elongation factor</keyword>
<keyword id="KW-0648">Protein biosynthesis</keyword>